<proteinExistence type="evidence at protein level"/>
<organism>
    <name type="scientific">Rattus norvegicus</name>
    <name type="common">Rat</name>
    <dbReference type="NCBI Taxonomy" id="10116"/>
    <lineage>
        <taxon>Eukaryota</taxon>
        <taxon>Metazoa</taxon>
        <taxon>Chordata</taxon>
        <taxon>Craniata</taxon>
        <taxon>Vertebrata</taxon>
        <taxon>Euteleostomi</taxon>
        <taxon>Mammalia</taxon>
        <taxon>Eutheria</taxon>
        <taxon>Euarchontoglires</taxon>
        <taxon>Glires</taxon>
        <taxon>Rodentia</taxon>
        <taxon>Myomorpha</taxon>
        <taxon>Muroidea</taxon>
        <taxon>Muridae</taxon>
        <taxon>Murinae</taxon>
        <taxon>Rattus</taxon>
    </lineage>
</organism>
<name>SMRCD_RAT</name>
<evidence type="ECO:0000250" key="1"/>
<evidence type="ECO:0000250" key="2">
    <source>
        <dbReference type="UniProtKB" id="Q9H4L7"/>
    </source>
</evidence>
<evidence type="ECO:0000255" key="3"/>
<evidence type="ECO:0000255" key="4">
    <source>
        <dbReference type="PROSITE-ProRule" id="PRU00468"/>
    </source>
</evidence>
<evidence type="ECO:0000255" key="5">
    <source>
        <dbReference type="PROSITE-ProRule" id="PRU00541"/>
    </source>
</evidence>
<evidence type="ECO:0000255" key="6">
    <source>
        <dbReference type="PROSITE-ProRule" id="PRU00542"/>
    </source>
</evidence>
<evidence type="ECO:0000256" key="7">
    <source>
        <dbReference type="SAM" id="MobiDB-lite"/>
    </source>
</evidence>
<evidence type="ECO:0000305" key="8"/>
<evidence type="ECO:0007744" key="9">
    <source>
    </source>
</evidence>
<accession>D3Z9Z9</accession>
<feature type="chain" id="PRO_0000416934" description="SWI/SNF-related matrix-associated actin-dependent regulator of chromatin subfamily A containing DEAD/H box 1">
    <location>
        <begin position="1"/>
        <end position="1024"/>
    </location>
</feature>
<feature type="domain" description="CUE 1" evidence="4">
    <location>
        <begin position="156"/>
        <end position="198"/>
    </location>
</feature>
<feature type="domain" description="CUE 2" evidence="4">
    <location>
        <begin position="250"/>
        <end position="293"/>
    </location>
</feature>
<feature type="domain" description="Helicase ATP-binding" evidence="5">
    <location>
        <begin position="507"/>
        <end position="675"/>
    </location>
</feature>
<feature type="domain" description="Helicase C-terminal" evidence="6">
    <location>
        <begin position="856"/>
        <end position="1008"/>
    </location>
</feature>
<feature type="region of interest" description="Disordered" evidence="7">
    <location>
        <begin position="1"/>
        <end position="83"/>
    </location>
</feature>
<feature type="region of interest" description="Disordered" evidence="7">
    <location>
        <begin position="201"/>
        <end position="250"/>
    </location>
</feature>
<feature type="region of interest" description="Disordered" evidence="7">
    <location>
        <begin position="331"/>
        <end position="369"/>
    </location>
</feature>
<feature type="short sequence motif" description="DEGH box" evidence="1">
    <location>
        <begin position="626"/>
        <end position="629"/>
    </location>
</feature>
<feature type="short sequence motif" description="Nuclear localization signal" evidence="3">
    <location>
        <begin position="719"/>
        <end position="736"/>
    </location>
</feature>
<feature type="short sequence motif" description="DEAD box" evidence="5">
    <location>
        <begin position="1003"/>
        <end position="1006"/>
    </location>
</feature>
<feature type="compositionally biased region" description="Basic and acidic residues" evidence="7">
    <location>
        <begin position="7"/>
        <end position="19"/>
    </location>
</feature>
<feature type="binding site" evidence="5">
    <location>
        <begin position="519"/>
        <end position="527"/>
    </location>
    <ligand>
        <name>ATP</name>
        <dbReference type="ChEBI" id="CHEBI:30616"/>
    </ligand>
</feature>
<feature type="binding site" evidence="5">
    <location>
        <begin position="895"/>
        <end position="902"/>
    </location>
    <ligand>
        <name>ATP</name>
        <dbReference type="ChEBI" id="CHEBI:30616"/>
    </ligand>
</feature>
<feature type="modified residue" description="N-acetylmethionine" evidence="2">
    <location>
        <position position="1"/>
    </location>
</feature>
<feature type="modified residue" description="Phosphothreonine" evidence="2">
    <location>
        <position position="54"/>
    </location>
</feature>
<feature type="modified residue" description="Phosphoserine" evidence="2">
    <location>
        <position position="57"/>
    </location>
</feature>
<feature type="modified residue" description="Phosphoserine" evidence="2">
    <location>
        <position position="79"/>
    </location>
</feature>
<feature type="modified residue" description="Phosphoserine" evidence="9">
    <location>
        <position position="124"/>
    </location>
</feature>
<feature type="modified residue" description="Phosphoserine" evidence="9">
    <location>
        <position position="127"/>
    </location>
</feature>
<feature type="modified residue" description="Phosphoserine" evidence="2">
    <location>
        <position position="132"/>
    </location>
</feature>
<feature type="modified residue" description="Phosphoserine" evidence="2">
    <location>
        <position position="145"/>
    </location>
</feature>
<feature type="modified residue" description="Phosphoserine" evidence="9">
    <location>
        <position position="151"/>
    </location>
</feature>
<feature type="modified residue" description="Phosphoserine" evidence="2">
    <location>
        <position position="210"/>
    </location>
</feature>
<feature type="modified residue" description="Phosphoserine" evidence="2">
    <location>
        <position position="213"/>
    </location>
</feature>
<feature type="modified residue" description="Phosphotyrosine" evidence="2">
    <location>
        <position position="216"/>
    </location>
</feature>
<feature type="modified residue" description="Phosphoserine" evidence="2">
    <location>
        <position position="238"/>
    </location>
</feature>
<feature type="modified residue" description="Phosphoserine" evidence="2">
    <location>
        <position position="241"/>
    </location>
</feature>
<feature type="modified residue" description="Phosphoserine" evidence="2">
    <location>
        <position position="301"/>
    </location>
</feature>
<feature type="cross-link" description="Glycyl lysine isopeptide (Lys-Gly) (interchain with G-Cter in SUMO2)" evidence="2">
    <location>
        <position position="77"/>
    </location>
</feature>
<feature type="cross-link" description="Glycyl lysine isopeptide (Lys-Gly) (interchain with G-Cter in SUMO2)" evidence="2">
    <location>
        <position position="333"/>
    </location>
</feature>
<feature type="cross-link" description="Glycyl lysine isopeptide (Lys-Gly) (interchain with G-Cter in SUMO2)" evidence="2">
    <location>
        <position position="469"/>
    </location>
</feature>
<feature type="cross-link" description="Glycyl lysine isopeptide (Lys-Gly) (interchain with G-Cter in SUMO2)" evidence="2">
    <location>
        <position position="722"/>
    </location>
</feature>
<feature type="cross-link" description="Glycyl lysine isopeptide (Lys-Gly) (interchain with G-Cter in SUMO2)" evidence="2">
    <location>
        <position position="994"/>
    </location>
</feature>
<protein>
    <recommendedName>
        <fullName>SWI/SNF-related matrix-associated actin-dependent regulator of chromatin subfamily A containing DEAD/H box 1</fullName>
        <ecNumber>3.6.4.12</ecNumber>
    </recommendedName>
</protein>
<sequence length="1024" mass="116788">MNLFNLDRFRFEKRSKIEEAPEAAPQPSQPGPSSPISLSAEEENAEGEVSRANTPDSDVTEKTEDSSVPEPPDNESKASLSCFQNQRTIQEYIDLSSDSEDVSPNCSSTVQEKKFSKDTVIIVSEPSEDEESHDLPSATRRNDISELEDLSELEDLKDAKLQTLKELFPQRSDSDLLKLIDSTSTMDGAIAAALLKFGDAGGGPRKRKLSSSSEAYEEDEANDDQSLKKPRGDRREESNESAEASSNWEKQESIVLKLQKEFPNFDKQELREVLKEHEWMYTEALESLKVFAEDQDVQCASQSEVTNGKEVARNQNYSKNAAKIKMKQKISMKPQNGFNKKRKKNVFNPKKAVEDSEYDSGSDAGSSLDEDYSSCEEVMEDGYKGKILHFLQDASIGELTLIPKCSQKKAQKIIELRPFNNWETLFTKMSKINGLSEDLIWNCKTVIQERDVVIRLMNKCEDISNKLTKQVTMLTGNGGGWNIEQPSLLNQSLSLKPYQKVGLNWLALVHKHGLNGILADEMGLGKTIQAIAFLAYLFQEGNKGPHLIVVPASTIDNWLREVNLWCPTLNVLCYYGSQEERKQIRFNIHNKYEDYNVIVTTYNCAISSSDDRSLFRRLKLNYAIFDEGHMLKNMGSIRYQHLMTINARNRLLLTGTPVQNNLLELMSLLNFVMPHMFSSSTSEIRRMFSSKTKPADEQSIYEKERIAHAKQIIKPFILRRVKEEVLKLLPPKKDQIELCAMSEKQEQLYSGLFNRLKKSINNLEKNTEMCNVMMQLRKMANHPLLHRQYYTAEKLKEMSQLMLKEPTHCEANPDLIFEDMEVMTDFELHVLCKQYQHINSYQLDMDLILDSGKFRTLGCILSELKQKGDRVVLFSQFTMMLDILEVLLKHHQHRYLRLDGKTQISERIHLIDEFNTDMDIFVFLLSTKAGGLGINLTSANVVILHDIDCNPYNDKQAEDRCHRVGQTKEVLVIKLISQGTIEESMLKINQQKLKLEQDMTTVDEADEGSMPADIATLLKTSMGL</sequence>
<comment type="function">
    <text evidence="2">DNA helicase that possesses intrinsic ATP-dependent nucleosome-remodeling activity and is both required for DNA repair and heterochromatin organization. Promotes DNA end resection of double-strand breaks (DSBs) following DNA damage: probably acts by weakening histone DNA interactions in nucleosomes flanking DSBs. Required for the restoration of heterochromatin organization after replication. Acts at replication sites to facilitate the maintenance of heterochromatin by directing H3 and H4 histones deacetylation, H3 'Lys-9' trimethylation (H3K9me3) and restoration of silencing.</text>
</comment>
<comment type="catalytic activity">
    <reaction evidence="2">
        <text>ATP + H2O = ADP + phosphate + H(+)</text>
        <dbReference type="Rhea" id="RHEA:13065"/>
        <dbReference type="ChEBI" id="CHEBI:15377"/>
        <dbReference type="ChEBI" id="CHEBI:15378"/>
        <dbReference type="ChEBI" id="CHEBI:30616"/>
        <dbReference type="ChEBI" id="CHEBI:43474"/>
        <dbReference type="ChEBI" id="CHEBI:456216"/>
        <dbReference type="EC" id="3.6.4.12"/>
    </reaction>
    <physiologicalReaction direction="left-to-right" evidence="2">
        <dbReference type="Rhea" id="RHEA:13066"/>
    </physiologicalReaction>
</comment>
<comment type="subunit">
    <text evidence="2">Binds to DNA preferentially in the vicinity of transcriptional start sites. Interacts with MSH2 and TRIM28. Part of a complex composed of TRIM28, HDAC1, HDAC2 and EHMT2. Interacts with PCNA.</text>
</comment>
<comment type="subcellular location">
    <subcellularLocation>
        <location evidence="2">Nucleus</location>
    </subcellularLocation>
    <subcellularLocation>
        <location evidence="2">Chromosome</location>
    </subcellularLocation>
    <text evidence="2">Colocalizes with PCNA at replication forks during S phase. Recruited to double-strand breaks (DSBs) sites of DNA damage.</text>
</comment>
<comment type="similarity">
    <text evidence="8">Belongs to the SNF2/RAD54 helicase family.</text>
</comment>
<keyword id="KW-0007">Acetylation</keyword>
<keyword id="KW-0067">ATP-binding</keyword>
<keyword id="KW-0156">Chromatin regulator</keyword>
<keyword id="KW-0158">Chromosome</keyword>
<keyword id="KW-0227">DNA damage</keyword>
<keyword id="KW-0234">DNA repair</keyword>
<keyword id="KW-0238">DNA-binding</keyword>
<keyword id="KW-0347">Helicase</keyword>
<keyword id="KW-0378">Hydrolase</keyword>
<keyword id="KW-1017">Isopeptide bond</keyword>
<keyword id="KW-0547">Nucleotide-binding</keyword>
<keyword id="KW-0539">Nucleus</keyword>
<keyword id="KW-0597">Phosphoprotein</keyword>
<keyword id="KW-1185">Reference proteome</keyword>
<keyword id="KW-0677">Repeat</keyword>
<keyword id="KW-0832">Ubl conjugation</keyword>
<reference key="1">
    <citation type="journal article" date="2004" name="Nature">
        <title>Genome sequence of the Brown Norway rat yields insights into mammalian evolution.</title>
        <authorList>
            <person name="Gibbs R.A."/>
            <person name="Weinstock G.M."/>
            <person name="Metzker M.L."/>
            <person name="Muzny D.M."/>
            <person name="Sodergren E.J."/>
            <person name="Scherer S."/>
            <person name="Scott G."/>
            <person name="Steffen D."/>
            <person name="Worley K.C."/>
            <person name="Burch P.E."/>
            <person name="Okwuonu G."/>
            <person name="Hines S."/>
            <person name="Lewis L."/>
            <person name="Deramo C."/>
            <person name="Delgado O."/>
            <person name="Dugan-Rocha S."/>
            <person name="Miner G."/>
            <person name="Morgan M."/>
            <person name="Hawes A."/>
            <person name="Gill R."/>
            <person name="Holt R.A."/>
            <person name="Adams M.D."/>
            <person name="Amanatides P.G."/>
            <person name="Baden-Tillson H."/>
            <person name="Barnstead M."/>
            <person name="Chin S."/>
            <person name="Evans C.A."/>
            <person name="Ferriera S."/>
            <person name="Fosler C."/>
            <person name="Glodek A."/>
            <person name="Gu Z."/>
            <person name="Jennings D."/>
            <person name="Kraft C.L."/>
            <person name="Nguyen T."/>
            <person name="Pfannkoch C.M."/>
            <person name="Sitter C."/>
            <person name="Sutton G.G."/>
            <person name="Venter J.C."/>
            <person name="Woodage T."/>
            <person name="Smith D."/>
            <person name="Lee H.-M."/>
            <person name="Gustafson E."/>
            <person name="Cahill P."/>
            <person name="Kana A."/>
            <person name="Doucette-Stamm L."/>
            <person name="Weinstock K."/>
            <person name="Fechtel K."/>
            <person name="Weiss R.B."/>
            <person name="Dunn D.M."/>
            <person name="Green E.D."/>
            <person name="Blakesley R.W."/>
            <person name="Bouffard G.G."/>
            <person name="De Jong P.J."/>
            <person name="Osoegawa K."/>
            <person name="Zhu B."/>
            <person name="Marra M."/>
            <person name="Schein J."/>
            <person name="Bosdet I."/>
            <person name="Fjell C."/>
            <person name="Jones S."/>
            <person name="Krzywinski M."/>
            <person name="Mathewson C."/>
            <person name="Siddiqui A."/>
            <person name="Wye N."/>
            <person name="McPherson J."/>
            <person name="Zhao S."/>
            <person name="Fraser C.M."/>
            <person name="Shetty J."/>
            <person name="Shatsman S."/>
            <person name="Geer K."/>
            <person name="Chen Y."/>
            <person name="Abramzon S."/>
            <person name="Nierman W.C."/>
            <person name="Havlak P.H."/>
            <person name="Chen R."/>
            <person name="Durbin K.J."/>
            <person name="Egan A."/>
            <person name="Ren Y."/>
            <person name="Song X.-Z."/>
            <person name="Li B."/>
            <person name="Liu Y."/>
            <person name="Qin X."/>
            <person name="Cawley S."/>
            <person name="Cooney A.J."/>
            <person name="D'Souza L.M."/>
            <person name="Martin K."/>
            <person name="Wu J.Q."/>
            <person name="Gonzalez-Garay M.L."/>
            <person name="Jackson A.R."/>
            <person name="Kalafus K.J."/>
            <person name="McLeod M.P."/>
            <person name="Milosavljevic A."/>
            <person name="Virk D."/>
            <person name="Volkov A."/>
            <person name="Wheeler D.A."/>
            <person name="Zhang Z."/>
            <person name="Bailey J.A."/>
            <person name="Eichler E.E."/>
            <person name="Tuzun E."/>
            <person name="Birney E."/>
            <person name="Mongin E."/>
            <person name="Ureta-Vidal A."/>
            <person name="Woodwark C."/>
            <person name="Zdobnov E."/>
            <person name="Bork P."/>
            <person name="Suyama M."/>
            <person name="Torrents D."/>
            <person name="Alexandersson M."/>
            <person name="Trask B.J."/>
            <person name="Young J.M."/>
            <person name="Huang H."/>
            <person name="Wang H."/>
            <person name="Xing H."/>
            <person name="Daniels S."/>
            <person name="Gietzen D."/>
            <person name="Schmidt J."/>
            <person name="Stevens K."/>
            <person name="Vitt U."/>
            <person name="Wingrove J."/>
            <person name="Camara F."/>
            <person name="Mar Alba M."/>
            <person name="Abril J.F."/>
            <person name="Guigo R."/>
            <person name="Smit A."/>
            <person name="Dubchak I."/>
            <person name="Rubin E.M."/>
            <person name="Couronne O."/>
            <person name="Poliakov A."/>
            <person name="Huebner N."/>
            <person name="Ganten D."/>
            <person name="Goesele C."/>
            <person name="Hummel O."/>
            <person name="Kreitler T."/>
            <person name="Lee Y.-A."/>
            <person name="Monti J."/>
            <person name="Schulz H."/>
            <person name="Zimdahl H."/>
            <person name="Himmelbauer H."/>
            <person name="Lehrach H."/>
            <person name="Jacob H.J."/>
            <person name="Bromberg S."/>
            <person name="Gullings-Handley J."/>
            <person name="Jensen-Seaman M.I."/>
            <person name="Kwitek A.E."/>
            <person name="Lazar J."/>
            <person name="Pasko D."/>
            <person name="Tonellato P.J."/>
            <person name="Twigger S."/>
            <person name="Ponting C.P."/>
            <person name="Duarte J.M."/>
            <person name="Rice S."/>
            <person name="Goodstadt L."/>
            <person name="Beatson S.A."/>
            <person name="Emes R.D."/>
            <person name="Winter E.E."/>
            <person name="Webber C."/>
            <person name="Brandt P."/>
            <person name="Nyakatura G."/>
            <person name="Adetobi M."/>
            <person name="Chiaromonte F."/>
            <person name="Elnitski L."/>
            <person name="Eswara P."/>
            <person name="Hardison R.C."/>
            <person name="Hou M."/>
            <person name="Kolbe D."/>
            <person name="Makova K."/>
            <person name="Miller W."/>
            <person name="Nekrutenko A."/>
            <person name="Riemer C."/>
            <person name="Schwartz S."/>
            <person name="Taylor J."/>
            <person name="Yang S."/>
            <person name="Zhang Y."/>
            <person name="Lindpaintner K."/>
            <person name="Andrews T.D."/>
            <person name="Caccamo M."/>
            <person name="Clamp M."/>
            <person name="Clarke L."/>
            <person name="Curwen V."/>
            <person name="Durbin R.M."/>
            <person name="Eyras E."/>
            <person name="Searle S.M."/>
            <person name="Cooper G.M."/>
            <person name="Batzoglou S."/>
            <person name="Brudno M."/>
            <person name="Sidow A."/>
            <person name="Stone E.A."/>
            <person name="Payseur B.A."/>
            <person name="Bourque G."/>
            <person name="Lopez-Otin C."/>
            <person name="Puente X.S."/>
            <person name="Chakrabarti K."/>
            <person name="Chatterji S."/>
            <person name="Dewey C."/>
            <person name="Pachter L."/>
            <person name="Bray N."/>
            <person name="Yap V.B."/>
            <person name="Caspi A."/>
            <person name="Tesler G."/>
            <person name="Pevzner P.A."/>
            <person name="Haussler D."/>
            <person name="Roskin K.M."/>
            <person name="Baertsch R."/>
            <person name="Clawson H."/>
            <person name="Furey T.S."/>
            <person name="Hinrichs A.S."/>
            <person name="Karolchik D."/>
            <person name="Kent W.J."/>
            <person name="Rosenbloom K.R."/>
            <person name="Trumbower H."/>
            <person name="Weirauch M."/>
            <person name="Cooper D.N."/>
            <person name="Stenson P.D."/>
            <person name="Ma B."/>
            <person name="Brent M."/>
            <person name="Arumugam M."/>
            <person name="Shteynberg D."/>
            <person name="Copley R.R."/>
            <person name="Taylor M.S."/>
            <person name="Riethman H."/>
            <person name="Mudunuri U."/>
            <person name="Peterson J."/>
            <person name="Guyer M."/>
            <person name="Felsenfeld A."/>
            <person name="Old S."/>
            <person name="Mockrin S."/>
            <person name="Collins F.S."/>
        </authorList>
    </citation>
    <scope>NUCLEOTIDE SEQUENCE [LARGE SCALE GENOMIC DNA]</scope>
    <source>
        <strain>Brown Norway</strain>
    </source>
</reference>
<reference key="2">
    <citation type="journal article" date="2012" name="Nat. Commun.">
        <title>Quantitative maps of protein phosphorylation sites across 14 different rat organs and tissues.</title>
        <authorList>
            <person name="Lundby A."/>
            <person name="Secher A."/>
            <person name="Lage K."/>
            <person name="Nordsborg N.B."/>
            <person name="Dmytriyev A."/>
            <person name="Lundby C."/>
            <person name="Olsen J.V."/>
        </authorList>
    </citation>
    <scope>PHOSPHORYLATION [LARGE SCALE ANALYSIS] AT SER-124; SER-127 AND SER-151</scope>
    <scope>IDENTIFICATION BY MASS SPECTROMETRY [LARGE SCALE ANALYSIS]</scope>
</reference>
<gene>
    <name type="primary">Smarcad1</name>
</gene>
<dbReference type="EC" id="3.6.4.12"/>
<dbReference type="EMBL" id="AABR03032021">
    <property type="status" value="NOT_ANNOTATED_CDS"/>
    <property type="molecule type" value="Genomic_DNA"/>
</dbReference>
<dbReference type="RefSeq" id="NP_001101334.2">
    <property type="nucleotide sequence ID" value="NM_001107864.2"/>
</dbReference>
<dbReference type="RefSeq" id="XP_006236661.1">
    <property type="nucleotide sequence ID" value="XM_006236599.2"/>
</dbReference>
<dbReference type="RefSeq" id="XP_006236662.1">
    <property type="nucleotide sequence ID" value="XM_006236600.5"/>
</dbReference>
<dbReference type="RefSeq" id="XP_063142113.1">
    <property type="nucleotide sequence ID" value="XM_063286043.1"/>
</dbReference>
<dbReference type="SMR" id="D3Z9Z9"/>
<dbReference type="FunCoup" id="D3Z9Z9">
    <property type="interactions" value="4446"/>
</dbReference>
<dbReference type="STRING" id="10116.ENSRNOP00000008585"/>
<dbReference type="iPTMnet" id="D3Z9Z9"/>
<dbReference type="PhosphoSitePlus" id="D3Z9Z9"/>
<dbReference type="PaxDb" id="10116-ENSRNOP00000008585"/>
<dbReference type="PeptideAtlas" id="D3Z9Z9"/>
<dbReference type="Ensembl" id="ENSRNOT00000008585.4">
    <property type="protein sequence ID" value="ENSRNOP00000008585.3"/>
    <property type="gene ID" value="ENSRNOG00000006391.4"/>
</dbReference>
<dbReference type="GeneID" id="312398"/>
<dbReference type="KEGG" id="rno:312398"/>
<dbReference type="UCSC" id="RGD:1309640">
    <property type="organism name" value="rat"/>
</dbReference>
<dbReference type="AGR" id="RGD:1309640"/>
<dbReference type="CTD" id="56916"/>
<dbReference type="RGD" id="1309640">
    <property type="gene designation" value="Smarcad1"/>
</dbReference>
<dbReference type="eggNOG" id="KOG0389">
    <property type="taxonomic scope" value="Eukaryota"/>
</dbReference>
<dbReference type="GeneTree" id="ENSGT00910000144252"/>
<dbReference type="HOGENOM" id="CLU_000315_16_3_1"/>
<dbReference type="InParanoid" id="D3Z9Z9"/>
<dbReference type="OMA" id="TIENWIG"/>
<dbReference type="PhylomeDB" id="D3Z9Z9"/>
<dbReference type="TreeFam" id="TF105768"/>
<dbReference type="PRO" id="PR:D3Z9Z9"/>
<dbReference type="Proteomes" id="UP000002494">
    <property type="component" value="Chromosome 4"/>
</dbReference>
<dbReference type="Bgee" id="ENSRNOG00000006391">
    <property type="expression patterns" value="Expressed in thymus and 20 other cell types or tissues"/>
</dbReference>
<dbReference type="GO" id="GO:0000785">
    <property type="term" value="C:chromatin"/>
    <property type="evidence" value="ECO:0000318"/>
    <property type="project" value="GO_Central"/>
</dbReference>
<dbReference type="GO" id="GO:0000792">
    <property type="term" value="C:heterochromatin"/>
    <property type="evidence" value="ECO:0000250"/>
    <property type="project" value="UniProtKB"/>
</dbReference>
<dbReference type="GO" id="GO:0043596">
    <property type="term" value="C:nuclear replication fork"/>
    <property type="evidence" value="ECO:0000266"/>
    <property type="project" value="RGD"/>
</dbReference>
<dbReference type="GO" id="GO:0005654">
    <property type="term" value="C:nucleoplasm"/>
    <property type="evidence" value="ECO:0007669"/>
    <property type="project" value="Ensembl"/>
</dbReference>
<dbReference type="GO" id="GO:0005634">
    <property type="term" value="C:nucleus"/>
    <property type="evidence" value="ECO:0000250"/>
    <property type="project" value="UniProtKB"/>
</dbReference>
<dbReference type="GO" id="GO:0035861">
    <property type="term" value="C:site of double-strand break"/>
    <property type="evidence" value="ECO:0000250"/>
    <property type="project" value="UniProtKB"/>
</dbReference>
<dbReference type="GO" id="GO:0005524">
    <property type="term" value="F:ATP binding"/>
    <property type="evidence" value="ECO:0007669"/>
    <property type="project" value="UniProtKB-KW"/>
</dbReference>
<dbReference type="GO" id="GO:0016887">
    <property type="term" value="F:ATP hydrolysis activity"/>
    <property type="evidence" value="ECO:0007669"/>
    <property type="project" value="RHEA"/>
</dbReference>
<dbReference type="GO" id="GO:0140658">
    <property type="term" value="F:ATP-dependent chromatin remodeler activity"/>
    <property type="evidence" value="ECO:0000250"/>
    <property type="project" value="UniProtKB"/>
</dbReference>
<dbReference type="GO" id="GO:0003682">
    <property type="term" value="F:chromatin binding"/>
    <property type="evidence" value="ECO:0000318"/>
    <property type="project" value="GO_Central"/>
</dbReference>
<dbReference type="GO" id="GO:0003677">
    <property type="term" value="F:DNA binding"/>
    <property type="evidence" value="ECO:0000266"/>
    <property type="project" value="RGD"/>
</dbReference>
<dbReference type="GO" id="GO:0004386">
    <property type="term" value="F:helicase activity"/>
    <property type="evidence" value="ECO:0007669"/>
    <property type="project" value="UniProtKB-KW"/>
</dbReference>
<dbReference type="GO" id="GO:0140750">
    <property type="term" value="F:nucleosome array spacer activity"/>
    <property type="evidence" value="ECO:0000318"/>
    <property type="project" value="GO_Central"/>
</dbReference>
<dbReference type="GO" id="GO:0043130">
    <property type="term" value="F:ubiquitin binding"/>
    <property type="evidence" value="ECO:0007669"/>
    <property type="project" value="InterPro"/>
</dbReference>
<dbReference type="GO" id="GO:0006338">
    <property type="term" value="P:chromatin remodeling"/>
    <property type="evidence" value="ECO:0000266"/>
    <property type="project" value="RGD"/>
</dbReference>
<dbReference type="GO" id="GO:0051304">
    <property type="term" value="P:chromosome separation"/>
    <property type="evidence" value="ECO:0000250"/>
    <property type="project" value="UniProtKB"/>
</dbReference>
<dbReference type="GO" id="GO:0000729">
    <property type="term" value="P:DNA double-strand break processing"/>
    <property type="evidence" value="ECO:0000250"/>
    <property type="project" value="UniProtKB"/>
</dbReference>
<dbReference type="GO" id="GO:0045944">
    <property type="term" value="P:positive regulation of transcription by RNA polymerase II"/>
    <property type="evidence" value="ECO:0000318"/>
    <property type="project" value="GO_Central"/>
</dbReference>
<dbReference type="GO" id="GO:0000018">
    <property type="term" value="P:regulation of DNA recombination"/>
    <property type="evidence" value="ECO:0000266"/>
    <property type="project" value="RGD"/>
</dbReference>
<dbReference type="CDD" id="cd17998">
    <property type="entry name" value="DEXHc_SMARCAD1"/>
    <property type="match status" value="1"/>
</dbReference>
<dbReference type="CDD" id="cd18793">
    <property type="entry name" value="SF2_C_SNF"/>
    <property type="match status" value="1"/>
</dbReference>
<dbReference type="FunFam" id="3.40.50.10810:FF:000014">
    <property type="entry name" value="SWI/SNF-related matrix-associated actin-dependent regulator of chromatin subfamily A containing DEAD/H box 1"/>
    <property type="match status" value="1"/>
</dbReference>
<dbReference type="FunFam" id="3.40.50.300:FF:000639">
    <property type="entry name" value="SWI/SNF-related matrix-associated actin-dependent regulator of chromatin subfamily A containing DEAD/H box 1 isoform X1"/>
    <property type="match status" value="1"/>
</dbReference>
<dbReference type="Gene3D" id="3.40.50.300">
    <property type="entry name" value="P-loop containing nucleotide triphosphate hydrolases"/>
    <property type="match status" value="1"/>
</dbReference>
<dbReference type="Gene3D" id="3.40.50.10810">
    <property type="entry name" value="Tandem AAA-ATPase domain"/>
    <property type="match status" value="1"/>
</dbReference>
<dbReference type="InterPro" id="IPR003892">
    <property type="entry name" value="CUE"/>
</dbReference>
<dbReference type="InterPro" id="IPR014001">
    <property type="entry name" value="Helicase_ATP-bd"/>
</dbReference>
<dbReference type="InterPro" id="IPR001650">
    <property type="entry name" value="Helicase_C-like"/>
</dbReference>
<dbReference type="InterPro" id="IPR027417">
    <property type="entry name" value="P-loop_NTPase"/>
</dbReference>
<dbReference type="InterPro" id="IPR038718">
    <property type="entry name" value="SNF2-like_sf"/>
</dbReference>
<dbReference type="InterPro" id="IPR049730">
    <property type="entry name" value="SNF2/RAD54-like_C"/>
</dbReference>
<dbReference type="InterPro" id="IPR000330">
    <property type="entry name" value="SNF2_N"/>
</dbReference>
<dbReference type="PANTHER" id="PTHR10799">
    <property type="entry name" value="SNF2/RAD54 HELICASE FAMILY"/>
    <property type="match status" value="1"/>
</dbReference>
<dbReference type="Pfam" id="PF00271">
    <property type="entry name" value="Helicase_C"/>
    <property type="match status" value="1"/>
</dbReference>
<dbReference type="Pfam" id="PF00176">
    <property type="entry name" value="SNF2-rel_dom"/>
    <property type="match status" value="1"/>
</dbReference>
<dbReference type="SMART" id="SM00487">
    <property type="entry name" value="DEXDc"/>
    <property type="match status" value="1"/>
</dbReference>
<dbReference type="SMART" id="SM00490">
    <property type="entry name" value="HELICc"/>
    <property type="match status" value="1"/>
</dbReference>
<dbReference type="SUPFAM" id="SSF52540">
    <property type="entry name" value="P-loop containing nucleoside triphosphate hydrolases"/>
    <property type="match status" value="2"/>
</dbReference>
<dbReference type="PROSITE" id="PS51140">
    <property type="entry name" value="CUE"/>
    <property type="match status" value="2"/>
</dbReference>
<dbReference type="PROSITE" id="PS51192">
    <property type="entry name" value="HELICASE_ATP_BIND_1"/>
    <property type="match status" value="1"/>
</dbReference>
<dbReference type="PROSITE" id="PS51194">
    <property type="entry name" value="HELICASE_CTER"/>
    <property type="match status" value="1"/>
</dbReference>